<reference key="1">
    <citation type="journal article" date="2024" name="J. Agric. Food Chem.">
        <title>Discovery of a hybrid molecule with phytotoxic activity by genome mining, heterologous expression, and OSMAC strategy.</title>
        <authorList>
            <person name="Lu Y."/>
            <person name="Li Y."/>
            <person name="Dou M."/>
            <person name="Liu D."/>
            <person name="Lin W."/>
            <person name="Fan A."/>
        </authorList>
    </citation>
    <scope>NUCLEOTIDE SEQUENCE [GENOMIC DNA]</scope>
    <scope>FUNCTION</scope>
    <scope>PATHWAY</scope>
</reference>
<proteinExistence type="inferred from homology"/>
<sequence>MYDVIVIGAGWCGLVAAKTYLQACPDAQVLIVDGDTSIGGTWSKERLYPHLVAEAHYGLFEFSDLPMNGDSVLPDGRIPSTAVHAYLVEYATKFNLIQRIRLNTWIENVRREAGELGMHWTLTAAGSQEQLHAKKVIITTGLTSEAFIPSLPGRDEFEGEVLHSKALGHPQTVERISDPSIRHVVVYGGSKSAFDAVYLLLRAGKTVDWVIREGGGGPSMMTPLSVLGQPSFRLNNSRLLALLSPHPFGTPGEQLSWWQRVVHHRSGQWAQFMILTIWRVMNYLFLRPWGYDSSPNGKRLKPLLGLDSLFWSPATLGVMTHPELWEEIHSGQRVKIHRDAITGLARDKRVMLSSGQELSSADLVVCATGWHARHSFFAPEEQLAVGLPGTASFDPKSQQKWLDLQRTADREITEELPILQKNPIPPPPLRCEDDHHLYRFIAPSRETPSHERSIAFVGFLRTAGAPIVYEAQSLWATAYLTGALEVPEAPQREREIARTNAWIRRRYLCGRKVPFALFDFLPYVDMLYRDLGINPNRKPNQIAELCGLYRPQDFKGVVSEWLANQQAKDVNGN</sequence>
<organism>
    <name type="scientific">Aspergillus sclerotiorum</name>
    <dbReference type="NCBI Taxonomy" id="138282"/>
    <lineage>
        <taxon>Eukaryota</taxon>
        <taxon>Fungi</taxon>
        <taxon>Dikarya</taxon>
        <taxon>Ascomycota</taxon>
        <taxon>Pezizomycotina</taxon>
        <taxon>Eurotiomycetes</taxon>
        <taxon>Eurotiomycetidae</taxon>
        <taxon>Eurotiales</taxon>
        <taxon>Aspergillaceae</taxon>
        <taxon>Aspergillus</taxon>
        <taxon>Aspergillus subgen. Circumdati</taxon>
    </lineage>
</organism>
<keyword id="KW-0274">FAD</keyword>
<keyword id="KW-0285">Flavoprotein</keyword>
<keyword id="KW-0325">Glycoprotein</keyword>
<keyword id="KW-0503">Monooxygenase</keyword>
<keyword id="KW-0560">Oxidoreductase</keyword>
<keyword id="KW-0732">Signal</keyword>
<name>RESA_ASPSL</name>
<dbReference type="EC" id="1.-.-.-" evidence="8"/>
<dbReference type="GO" id="GO:0004497">
    <property type="term" value="F:monooxygenase activity"/>
    <property type="evidence" value="ECO:0007669"/>
    <property type="project" value="UniProtKB-KW"/>
</dbReference>
<dbReference type="Gene3D" id="3.50.50.60">
    <property type="entry name" value="FAD/NAD(P)-binding domain"/>
    <property type="match status" value="1"/>
</dbReference>
<dbReference type="InterPro" id="IPR036188">
    <property type="entry name" value="FAD/NAD-bd_sf"/>
</dbReference>
<dbReference type="InterPro" id="IPR050346">
    <property type="entry name" value="FMO-like"/>
</dbReference>
<dbReference type="PANTHER" id="PTHR23023">
    <property type="entry name" value="DIMETHYLANILINE MONOOXYGENASE"/>
    <property type="match status" value="1"/>
</dbReference>
<dbReference type="Pfam" id="PF13738">
    <property type="entry name" value="Pyr_redox_3"/>
    <property type="match status" value="1"/>
</dbReference>
<dbReference type="SUPFAM" id="SSF51905">
    <property type="entry name" value="FAD/NAD(P)-binding domain"/>
    <property type="match status" value="2"/>
</dbReference>
<gene>
    <name evidence="6" type="primary">resA</name>
</gene>
<feature type="signal peptide" evidence="3">
    <location>
        <begin position="1"/>
        <end position="17"/>
    </location>
</feature>
<feature type="chain" id="PRO_0000461543" description="FAD-dependent monooxygenase resA">
    <location>
        <begin position="18"/>
        <end position="573"/>
    </location>
</feature>
<feature type="binding site" evidence="2">
    <location>
        <position position="106"/>
    </location>
    <ligand>
        <name>FAD</name>
        <dbReference type="ChEBI" id="CHEBI:57692"/>
    </ligand>
</feature>
<feature type="glycosylation site" description="N-linked (GlcNAc...) asparagine" evidence="4">
    <location>
        <position position="235"/>
    </location>
</feature>
<accession>P0DXV5</accession>
<evidence type="ECO:0000250" key="1">
    <source>
        <dbReference type="UniProtKB" id="A0A0L1JEZ9"/>
    </source>
</evidence>
<evidence type="ECO:0000250" key="2">
    <source>
        <dbReference type="UniProtKB" id="Q47PU3"/>
    </source>
</evidence>
<evidence type="ECO:0000255" key="3"/>
<evidence type="ECO:0000255" key="4">
    <source>
        <dbReference type="PROSITE-ProRule" id="PRU00498"/>
    </source>
</evidence>
<evidence type="ECO:0000269" key="5">
    <source>
    </source>
</evidence>
<evidence type="ECO:0000303" key="6">
    <source>
    </source>
</evidence>
<evidence type="ECO:0000305" key="7"/>
<evidence type="ECO:0000305" key="8">
    <source>
    </source>
</evidence>
<comment type="function">
    <text evidence="1 5">FAD-dependent monooxygenase; part of the gene cluster that mediates the biosynthesis of the tetrahydropyranyl antifungal agent restricticin that acts as an inhibitor of CYP51 and blocks the ergosterol biosynthesis (PubMed:39105744). The highly reducing polyketide synthase resH, the short chain dehydrogenase resG, the cyclase resF, the FAD-dependent monooxygenase resA and the enoylreductase resD are required to generate the first stable intermediate desmethylrestrictinol. ResH with resD biosynthesize the first polyketide chain intermediate that is reduced by resG, followed by epoxidation by resA before 6-endo cyclization via epoxide opening by resF leads to desmethylrestrictinol. The methyltransferase resE then catalyzes the C4 O-methylation of desmethylrestrictinol to produce restrictinol, and the nonribosomal peptide synthetase resC catalyzes the C3 esterification of restrictinol with glycine that leads to restricticin (By similarity).</text>
</comment>
<comment type="cofactor">
    <cofactor evidence="7">
        <name>FAD</name>
        <dbReference type="ChEBI" id="CHEBI:57692"/>
    </cofactor>
</comment>
<comment type="pathway">
    <text evidence="5">Antifungal biosynthesis.</text>
</comment>
<comment type="similarity">
    <text evidence="7">Belongs to the FAD-binding monooxygenase family.</text>
</comment>
<protein>
    <recommendedName>
        <fullName evidence="6">FAD-dependent monooxygenase resA</fullName>
        <ecNumber evidence="8">1.-.-.-</ecNumber>
    </recommendedName>
    <alternativeName>
        <fullName evidence="6">Restricticin biosynthesis cluster protein A</fullName>
    </alternativeName>
</protein>